<evidence type="ECO:0000255" key="1">
    <source>
        <dbReference type="HAMAP-Rule" id="MF_00012"/>
    </source>
</evidence>
<accession>B9EBF6</accession>
<comment type="function">
    <text evidence="1">Functions in the biosynthesis of branched-chain amino acids. Catalyzes the dehydration of (2R,3R)-2,3-dihydroxy-3-methylpentanoate (2,3-dihydroxy-3-methylvalerate) into 2-oxo-3-methylpentanoate (2-oxo-3-methylvalerate) and of (2R)-2,3-dihydroxy-3-methylbutanoate (2,3-dihydroxyisovalerate) into 2-oxo-3-methylbutanoate (2-oxoisovalerate), the penultimate precursor to L-isoleucine and L-valine, respectively.</text>
</comment>
<comment type="catalytic activity">
    <reaction evidence="1">
        <text>(2R)-2,3-dihydroxy-3-methylbutanoate = 3-methyl-2-oxobutanoate + H2O</text>
        <dbReference type="Rhea" id="RHEA:24809"/>
        <dbReference type="ChEBI" id="CHEBI:11851"/>
        <dbReference type="ChEBI" id="CHEBI:15377"/>
        <dbReference type="ChEBI" id="CHEBI:49072"/>
        <dbReference type="EC" id="4.2.1.9"/>
    </reaction>
    <physiologicalReaction direction="left-to-right" evidence="1">
        <dbReference type="Rhea" id="RHEA:24810"/>
    </physiologicalReaction>
</comment>
<comment type="catalytic activity">
    <reaction evidence="1">
        <text>(2R,3R)-2,3-dihydroxy-3-methylpentanoate = (S)-3-methyl-2-oxopentanoate + H2O</text>
        <dbReference type="Rhea" id="RHEA:27694"/>
        <dbReference type="ChEBI" id="CHEBI:15377"/>
        <dbReference type="ChEBI" id="CHEBI:35146"/>
        <dbReference type="ChEBI" id="CHEBI:49258"/>
        <dbReference type="EC" id="4.2.1.9"/>
    </reaction>
    <physiologicalReaction direction="left-to-right" evidence="1">
        <dbReference type="Rhea" id="RHEA:27695"/>
    </physiologicalReaction>
</comment>
<comment type="cofactor">
    <cofactor evidence="1">
        <name>[2Fe-2S] cluster</name>
        <dbReference type="ChEBI" id="CHEBI:190135"/>
    </cofactor>
    <text evidence="1">Binds 1 [2Fe-2S] cluster per subunit. This cluster acts as a Lewis acid cofactor.</text>
</comment>
<comment type="cofactor">
    <cofactor evidence="1">
        <name>Mg(2+)</name>
        <dbReference type="ChEBI" id="CHEBI:18420"/>
    </cofactor>
</comment>
<comment type="pathway">
    <text evidence="1">Amino-acid biosynthesis; L-isoleucine biosynthesis; L-isoleucine from 2-oxobutanoate: step 3/4.</text>
</comment>
<comment type="pathway">
    <text evidence="1">Amino-acid biosynthesis; L-valine biosynthesis; L-valine from pyruvate: step 3/4.</text>
</comment>
<comment type="subunit">
    <text evidence="1">Homodimer.</text>
</comment>
<comment type="similarity">
    <text evidence="1">Belongs to the IlvD/Edd family.</text>
</comment>
<organism>
    <name type="scientific">Macrococcus caseolyticus (strain JCSC5402)</name>
    <name type="common">Macrococcoides caseolyticum</name>
    <dbReference type="NCBI Taxonomy" id="458233"/>
    <lineage>
        <taxon>Bacteria</taxon>
        <taxon>Bacillati</taxon>
        <taxon>Bacillota</taxon>
        <taxon>Bacilli</taxon>
        <taxon>Bacillales</taxon>
        <taxon>Staphylococcaceae</taxon>
        <taxon>Macrococcoides</taxon>
    </lineage>
</organism>
<proteinExistence type="inferred from homology"/>
<feature type="chain" id="PRO_1000190670" description="Dihydroxy-acid dehydratase">
    <location>
        <begin position="1"/>
        <end position="562"/>
    </location>
</feature>
<feature type="active site" description="Proton acceptor" evidence="1">
    <location>
        <position position="472"/>
    </location>
</feature>
<feature type="binding site" evidence="1">
    <location>
        <position position="80"/>
    </location>
    <ligand>
        <name>Mg(2+)</name>
        <dbReference type="ChEBI" id="CHEBI:18420"/>
    </ligand>
</feature>
<feature type="binding site" evidence="1">
    <location>
        <position position="121"/>
    </location>
    <ligand>
        <name>[2Fe-2S] cluster</name>
        <dbReference type="ChEBI" id="CHEBI:190135"/>
    </ligand>
</feature>
<feature type="binding site" evidence="1">
    <location>
        <position position="122"/>
    </location>
    <ligand>
        <name>Mg(2+)</name>
        <dbReference type="ChEBI" id="CHEBI:18420"/>
    </ligand>
</feature>
<feature type="binding site" description="via carbamate group" evidence="1">
    <location>
        <position position="123"/>
    </location>
    <ligand>
        <name>Mg(2+)</name>
        <dbReference type="ChEBI" id="CHEBI:18420"/>
    </ligand>
</feature>
<feature type="binding site" evidence="1">
    <location>
        <position position="194"/>
    </location>
    <ligand>
        <name>[2Fe-2S] cluster</name>
        <dbReference type="ChEBI" id="CHEBI:190135"/>
    </ligand>
</feature>
<feature type="binding site" evidence="1">
    <location>
        <position position="446"/>
    </location>
    <ligand>
        <name>Mg(2+)</name>
        <dbReference type="ChEBI" id="CHEBI:18420"/>
    </ligand>
</feature>
<feature type="modified residue" description="N6-carboxylysine" evidence="1">
    <location>
        <position position="123"/>
    </location>
</feature>
<sequence length="562" mass="59978">MRSNMIKKGPEQAPARSLLHATGQIKSPEDMNKPFIAICNSYIDIVPGHVHLRELADIAKEAIREAGGIPFEFNTIGVDDGIAMGHIGMRYSLPSREIIADAAETVINAHWFDGVFYIPNCDKITPGMLLAAVRTNVPAIFCSGGPMKAGLSATGKALTLSSMFEAVGAFKEGTLTKEDFLDMEQNACPTCGSCAGMFTANSMNCLMEVLGLALPFNGTALAVSKERRALIRESAFKLMDLVKRDIKPKDIVTKEAIDDAFALDMAMGGSTNTVLHTLALANEAGIDYDLERINEIAEKTPYLSKIAPSSSYSMHDVHTAGGVPAIINELMKREGILHPDRMTVTGDTLRDNNAAYTIQNEEVIHTLDNPYSEHGGLSMLHGNIAPLGGVIKVGGVDPSIQTFTGAAICFDSHDAAVAAIDNHTVRPGHVVVIRYEGPKGGPGMPEMLAPTSSIVGRGLGKEVALITDGRFSGATRGIAVGHISPEAAALGPIALIEDGDMVTIDLVHRTLNVDVTDDELKQRKARLQPFKAKVKSGYLARYTALVTSANTGGVMQIPEHLL</sequence>
<reference key="1">
    <citation type="journal article" date="2009" name="J. Bacteriol.">
        <title>Complete genome sequence of Macrococcus caseolyticus strain JCSCS5402, reflecting the ancestral genome of the human-pathogenic staphylococci.</title>
        <authorList>
            <person name="Baba T."/>
            <person name="Kuwahara-Arai K."/>
            <person name="Uchiyama I."/>
            <person name="Takeuchi F."/>
            <person name="Ito T."/>
            <person name="Hiramatsu K."/>
        </authorList>
    </citation>
    <scope>NUCLEOTIDE SEQUENCE [LARGE SCALE GENOMIC DNA]</scope>
    <source>
        <strain>JCSC5402</strain>
    </source>
</reference>
<dbReference type="EC" id="4.2.1.9" evidence="1"/>
<dbReference type="EMBL" id="AP009484">
    <property type="protein sequence ID" value="BAH17567.1"/>
    <property type="molecule type" value="Genomic_DNA"/>
</dbReference>
<dbReference type="RefSeq" id="WP_012656767.1">
    <property type="nucleotide sequence ID" value="NC_011999.1"/>
</dbReference>
<dbReference type="SMR" id="B9EBF6"/>
<dbReference type="STRING" id="458233.MCCL_0860"/>
<dbReference type="KEGG" id="mcl:MCCL_0860"/>
<dbReference type="eggNOG" id="COG0129">
    <property type="taxonomic scope" value="Bacteria"/>
</dbReference>
<dbReference type="HOGENOM" id="CLU_014271_4_2_9"/>
<dbReference type="OrthoDB" id="9807077at2"/>
<dbReference type="UniPathway" id="UPA00047">
    <property type="reaction ID" value="UER00057"/>
</dbReference>
<dbReference type="UniPathway" id="UPA00049">
    <property type="reaction ID" value="UER00061"/>
</dbReference>
<dbReference type="Proteomes" id="UP000001383">
    <property type="component" value="Chromosome"/>
</dbReference>
<dbReference type="GO" id="GO:0005829">
    <property type="term" value="C:cytosol"/>
    <property type="evidence" value="ECO:0007669"/>
    <property type="project" value="TreeGrafter"/>
</dbReference>
<dbReference type="GO" id="GO:0051537">
    <property type="term" value="F:2 iron, 2 sulfur cluster binding"/>
    <property type="evidence" value="ECO:0007669"/>
    <property type="project" value="UniProtKB-UniRule"/>
</dbReference>
<dbReference type="GO" id="GO:0004160">
    <property type="term" value="F:dihydroxy-acid dehydratase activity"/>
    <property type="evidence" value="ECO:0007669"/>
    <property type="project" value="UniProtKB-UniRule"/>
</dbReference>
<dbReference type="GO" id="GO:0000287">
    <property type="term" value="F:magnesium ion binding"/>
    <property type="evidence" value="ECO:0007669"/>
    <property type="project" value="UniProtKB-UniRule"/>
</dbReference>
<dbReference type="GO" id="GO:0009097">
    <property type="term" value="P:isoleucine biosynthetic process"/>
    <property type="evidence" value="ECO:0007669"/>
    <property type="project" value="UniProtKB-UniRule"/>
</dbReference>
<dbReference type="GO" id="GO:0009099">
    <property type="term" value="P:L-valine biosynthetic process"/>
    <property type="evidence" value="ECO:0007669"/>
    <property type="project" value="UniProtKB-UniRule"/>
</dbReference>
<dbReference type="FunFam" id="3.50.30.80:FF:000001">
    <property type="entry name" value="Dihydroxy-acid dehydratase"/>
    <property type="match status" value="1"/>
</dbReference>
<dbReference type="Gene3D" id="3.50.30.80">
    <property type="entry name" value="IlvD/EDD C-terminal domain-like"/>
    <property type="match status" value="1"/>
</dbReference>
<dbReference type="HAMAP" id="MF_00012">
    <property type="entry name" value="IlvD"/>
    <property type="match status" value="1"/>
</dbReference>
<dbReference type="InterPro" id="IPR042096">
    <property type="entry name" value="Dihydro-acid_dehy_C"/>
</dbReference>
<dbReference type="InterPro" id="IPR004404">
    <property type="entry name" value="DihydroxyA_deHydtase"/>
</dbReference>
<dbReference type="InterPro" id="IPR020558">
    <property type="entry name" value="DiOHA_6PGluconate_deHydtase_CS"/>
</dbReference>
<dbReference type="InterPro" id="IPR056740">
    <property type="entry name" value="ILV_EDD_C"/>
</dbReference>
<dbReference type="InterPro" id="IPR000581">
    <property type="entry name" value="ILV_EDD_N"/>
</dbReference>
<dbReference type="InterPro" id="IPR037237">
    <property type="entry name" value="IlvD/EDD_N"/>
</dbReference>
<dbReference type="NCBIfam" id="TIGR00110">
    <property type="entry name" value="ilvD"/>
    <property type="match status" value="1"/>
</dbReference>
<dbReference type="NCBIfam" id="NF002068">
    <property type="entry name" value="PRK00911.1"/>
    <property type="match status" value="1"/>
</dbReference>
<dbReference type="PANTHER" id="PTHR43661">
    <property type="entry name" value="D-XYLONATE DEHYDRATASE"/>
    <property type="match status" value="1"/>
</dbReference>
<dbReference type="PANTHER" id="PTHR43661:SF3">
    <property type="entry name" value="D-XYLONATE DEHYDRATASE YAGF-RELATED"/>
    <property type="match status" value="1"/>
</dbReference>
<dbReference type="Pfam" id="PF24877">
    <property type="entry name" value="ILV_EDD_C"/>
    <property type="match status" value="1"/>
</dbReference>
<dbReference type="Pfam" id="PF00920">
    <property type="entry name" value="ILVD_EDD_N"/>
    <property type="match status" value="1"/>
</dbReference>
<dbReference type="SUPFAM" id="SSF143975">
    <property type="entry name" value="IlvD/EDD N-terminal domain-like"/>
    <property type="match status" value="1"/>
</dbReference>
<dbReference type="SUPFAM" id="SSF52016">
    <property type="entry name" value="LeuD/IlvD-like"/>
    <property type="match status" value="1"/>
</dbReference>
<dbReference type="PROSITE" id="PS00886">
    <property type="entry name" value="ILVD_EDD_1"/>
    <property type="match status" value="1"/>
</dbReference>
<dbReference type="PROSITE" id="PS00887">
    <property type="entry name" value="ILVD_EDD_2"/>
    <property type="match status" value="1"/>
</dbReference>
<keyword id="KW-0001">2Fe-2S</keyword>
<keyword id="KW-0028">Amino-acid biosynthesis</keyword>
<keyword id="KW-0100">Branched-chain amino acid biosynthesis</keyword>
<keyword id="KW-0408">Iron</keyword>
<keyword id="KW-0411">Iron-sulfur</keyword>
<keyword id="KW-0456">Lyase</keyword>
<keyword id="KW-0460">Magnesium</keyword>
<keyword id="KW-0479">Metal-binding</keyword>
<keyword id="KW-1185">Reference proteome</keyword>
<protein>
    <recommendedName>
        <fullName evidence="1">Dihydroxy-acid dehydratase</fullName>
        <shortName evidence="1">DAD</shortName>
        <ecNumber evidence="1">4.2.1.9</ecNumber>
    </recommendedName>
</protein>
<name>ILVD_MACCJ</name>
<gene>
    <name evidence="1" type="primary">ilvD</name>
    <name type="ordered locus">MCCL_0860</name>
</gene>